<dbReference type="EMBL" id="AM884176">
    <property type="protein sequence ID" value="CAP04331.1"/>
    <property type="molecule type" value="Genomic_DNA"/>
</dbReference>
<dbReference type="RefSeq" id="WP_009873961.1">
    <property type="nucleotide sequence ID" value="NC_010287.1"/>
</dbReference>
<dbReference type="RefSeq" id="YP_001654963.1">
    <property type="nucleotide sequence ID" value="NC_010287.1"/>
</dbReference>
<dbReference type="PDB" id="2M1B">
    <property type="method" value="NMR"/>
    <property type="chains" value="A=114-227"/>
</dbReference>
<dbReference type="PDB" id="3Q7R">
    <property type="method" value="X-ray"/>
    <property type="resolution" value="1.60 A"/>
    <property type="chains" value="A/B=2-113"/>
</dbReference>
<dbReference type="PDB" id="3Q7S">
    <property type="method" value="X-ray"/>
    <property type="resolution" value="2.10 A"/>
    <property type="chains" value="A/B=2-113"/>
</dbReference>
<dbReference type="PDB" id="3Q7T">
    <property type="method" value="X-ray"/>
    <property type="resolution" value="2.15 A"/>
    <property type="chains" value="A/B=2-113"/>
</dbReference>
<dbReference type="PDBsum" id="2M1B"/>
<dbReference type="PDBsum" id="3Q7R"/>
<dbReference type="PDBsum" id="3Q7S"/>
<dbReference type="PDBsum" id="3Q7T"/>
<dbReference type="BMRB" id="A0A0H3MDW1"/>
<dbReference type="SMR" id="A0A0H3MDW1"/>
<dbReference type="KEGG" id="ctb:CTL0894"/>
<dbReference type="PATRIC" id="fig|471472.4.peg.960"/>
<dbReference type="HOGENOM" id="CLU_1265073_0_0_0"/>
<dbReference type="EvolutionaryTrace" id="A0A0H3MDW1"/>
<dbReference type="PHI-base" id="PHI:7471"/>
<dbReference type="Proteomes" id="UP001154402">
    <property type="component" value="Chromosome"/>
</dbReference>
<dbReference type="GO" id="GO:0003677">
    <property type="term" value="F:DNA binding"/>
    <property type="evidence" value="ECO:0000314"/>
    <property type="project" value="UniProtKB"/>
</dbReference>
<dbReference type="GO" id="GO:0003700">
    <property type="term" value="F:DNA-binding transcription factor activity"/>
    <property type="evidence" value="ECO:0000314"/>
    <property type="project" value="UniProtKB"/>
</dbReference>
<dbReference type="GO" id="GO:0042802">
    <property type="term" value="F:identical protein binding"/>
    <property type="evidence" value="ECO:0000314"/>
    <property type="project" value="UniProtKB"/>
</dbReference>
<dbReference type="GO" id="GO:0042803">
    <property type="term" value="F:protein homodimerization activity"/>
    <property type="evidence" value="ECO:0000314"/>
    <property type="project" value="UniProtKB"/>
</dbReference>
<dbReference type="GO" id="GO:0043565">
    <property type="term" value="F:sequence-specific DNA binding"/>
    <property type="evidence" value="ECO:0000314"/>
    <property type="project" value="UniProtKB"/>
</dbReference>
<dbReference type="GO" id="GO:0000976">
    <property type="term" value="F:transcription cis-regulatory region binding"/>
    <property type="evidence" value="ECO:0000314"/>
    <property type="project" value="UniProtKB"/>
</dbReference>
<dbReference type="GO" id="GO:0000160">
    <property type="term" value="P:phosphorelay signal transduction system"/>
    <property type="evidence" value="ECO:0007669"/>
    <property type="project" value="UniProtKB-KW"/>
</dbReference>
<dbReference type="GO" id="GO:0045893">
    <property type="term" value="P:positive regulation of DNA-templated transcription"/>
    <property type="evidence" value="ECO:0000314"/>
    <property type="project" value="UniProtKB"/>
</dbReference>
<dbReference type="CDD" id="cd00383">
    <property type="entry name" value="trans_reg_C"/>
    <property type="match status" value="1"/>
</dbReference>
<dbReference type="Gene3D" id="3.40.50.2300">
    <property type="match status" value="1"/>
</dbReference>
<dbReference type="Gene3D" id="1.10.10.10">
    <property type="entry name" value="Winged helix-like DNA-binding domain superfamily/Winged helix DNA-binding domain"/>
    <property type="match status" value="1"/>
</dbReference>
<dbReference type="InterPro" id="IPR011006">
    <property type="entry name" value="CheY-like_superfamily"/>
</dbReference>
<dbReference type="InterPro" id="IPR055158">
    <property type="entry name" value="ChxR_N"/>
</dbReference>
<dbReference type="InterPro" id="IPR001867">
    <property type="entry name" value="OmpR/PhoB-type_DNA-bd"/>
</dbReference>
<dbReference type="InterPro" id="IPR016032">
    <property type="entry name" value="Sig_transdc_resp-reg_C-effctor"/>
</dbReference>
<dbReference type="InterPro" id="IPR001789">
    <property type="entry name" value="Sig_transdc_resp-reg_receiver"/>
</dbReference>
<dbReference type="InterPro" id="IPR036388">
    <property type="entry name" value="WH-like_DNA-bd_sf"/>
</dbReference>
<dbReference type="Pfam" id="PF22368">
    <property type="entry name" value="ChxR_N"/>
    <property type="match status" value="1"/>
</dbReference>
<dbReference type="Pfam" id="PF00486">
    <property type="entry name" value="Trans_reg_C"/>
    <property type="match status" value="1"/>
</dbReference>
<dbReference type="SMART" id="SM00862">
    <property type="entry name" value="Trans_reg_C"/>
    <property type="match status" value="1"/>
</dbReference>
<dbReference type="SUPFAM" id="SSF46894">
    <property type="entry name" value="C-terminal effector domain of the bipartite response regulators"/>
    <property type="match status" value="1"/>
</dbReference>
<dbReference type="SUPFAM" id="SSF52172">
    <property type="entry name" value="CheY-like"/>
    <property type="match status" value="1"/>
</dbReference>
<dbReference type="PROSITE" id="PS51755">
    <property type="entry name" value="OMPR_PHOB"/>
    <property type="match status" value="1"/>
</dbReference>
<dbReference type="PROSITE" id="PS50110">
    <property type="entry name" value="RESPONSE_REGULATORY"/>
    <property type="match status" value="1"/>
</dbReference>
<evidence type="ECO:0000255" key="1">
    <source>
        <dbReference type="PROSITE-ProRule" id="PRU00169"/>
    </source>
</evidence>
<evidence type="ECO:0000255" key="2">
    <source>
        <dbReference type="PROSITE-ProRule" id="PRU01091"/>
    </source>
</evidence>
<evidence type="ECO:0000269" key="3">
    <source>
    </source>
</evidence>
<evidence type="ECO:0000269" key="4">
    <source>
    </source>
</evidence>
<evidence type="ECO:0000269" key="5">
    <source>
    </source>
</evidence>
<evidence type="ECO:0000303" key="6">
    <source>
    </source>
</evidence>
<evidence type="ECO:0000303" key="7">
    <source>
    </source>
</evidence>
<evidence type="ECO:0000303" key="8">
    <source>
    </source>
</evidence>
<evidence type="ECO:0000312" key="9">
    <source>
        <dbReference type="EMBL" id="CAP04331.1"/>
    </source>
</evidence>
<evidence type="ECO:0007744" key="10">
    <source>
        <dbReference type="PDB" id="2M1B"/>
    </source>
</evidence>
<evidence type="ECO:0007744" key="11">
    <source>
        <dbReference type="PDB" id="3Q7R"/>
    </source>
</evidence>
<evidence type="ECO:0007744" key="12">
    <source>
        <dbReference type="PDB" id="3Q7S"/>
    </source>
</evidence>
<evidence type="ECO:0007744" key="13">
    <source>
        <dbReference type="PDB" id="3Q7T"/>
    </source>
</evidence>
<evidence type="ECO:0007829" key="14">
    <source>
        <dbReference type="PDB" id="3Q7R"/>
    </source>
</evidence>
<keyword id="KW-0002">3D-structure</keyword>
<keyword id="KW-0010">Activator</keyword>
<keyword id="KW-0238">DNA-binding</keyword>
<keyword id="KW-0804">Transcription</keyword>
<keyword id="KW-0805">Transcription regulation</keyword>
<keyword id="KW-0902">Two-component regulatory system</keyword>
<proteinExistence type="evidence at protein level"/>
<protein>
    <recommendedName>
        <fullName evidence="7">Atypical response regulator protein ChxR</fullName>
    </recommendedName>
    <alternativeName>
        <fullName evidence="9">Transcriptional regulatory protein</fullName>
    </alternativeName>
</protein>
<organism evidence="9">
    <name type="scientific">Chlamydia trachomatis serovar L2 (strain ATCC VR-902B / DSM 19102 / 434/Bu)</name>
    <dbReference type="NCBI Taxonomy" id="471472"/>
    <lineage>
        <taxon>Bacteria</taxon>
        <taxon>Pseudomonadati</taxon>
        <taxon>Chlamydiota</taxon>
        <taxon>Chlamydiia</taxon>
        <taxon>Chlamydiales</taxon>
        <taxon>Chlamydiaceae</taxon>
        <taxon>Chlamydia/Chlamydophila group</taxon>
        <taxon>Chlamydia</taxon>
    </lineage>
</organism>
<name>CHXR_CHLT2</name>
<feature type="chain" id="PRO_0000433386" description="Atypical response regulator protein ChxR">
    <location>
        <begin position="1"/>
        <end position="227"/>
    </location>
</feature>
<feature type="domain" description="Response regulatory" evidence="1">
    <location>
        <begin position="6"/>
        <end position="108"/>
    </location>
</feature>
<feature type="DNA-binding region" description="OmpR/PhoB-type" evidence="2">
    <location>
        <begin position="117"/>
        <end position="213"/>
    </location>
</feature>
<feature type="mutagenesis site" description="No effect on DNA-binding or dimerization. No effect on DNA-binding or dimerization; when associated with A-73." evidence="4">
    <original>E</original>
    <variation>A</variation>
    <location>
        <position position="49"/>
    </location>
</feature>
<feature type="mutagenesis site" description="No effect on DNA-binding or dimerization." evidence="3">
    <original>E</original>
    <variation>D</variation>
    <location>
        <position position="49"/>
    </location>
</feature>
<feature type="mutagenesis site" description="No effect on DNA-binding or dimerization. No effect on DNA-binding or dimerization; when associated with A-49." evidence="4">
    <original>D</original>
    <variation>A</variation>
    <location>
        <position position="73"/>
    </location>
</feature>
<feature type="mutagenesis site" description="No effect on DNA-binding or dimerization. No effect on DNA-binding or dimerization; when associated with A-101." evidence="4">
    <original>E</original>
    <variation>A</variation>
    <location>
        <position position="78"/>
    </location>
</feature>
<feature type="mutagenesis site" description="No effect on DNA-binding or dimerization." evidence="4">
    <original>W</original>
    <variation>A</variation>
    <location>
        <position position="89"/>
    </location>
</feature>
<feature type="mutagenesis site" description="Significantly reduced DNA-binding. No dimerization." evidence="4">
    <original>W</original>
    <variation>E</variation>
    <location>
        <position position="89"/>
    </location>
</feature>
<feature type="mutagenesis site" description="No effect on DNA-binding or dimerization. No effect on DNA-binding or dimerization; when associated with A-78." evidence="4">
    <original>K</original>
    <variation>A</variation>
    <location>
        <position position="101"/>
    </location>
</feature>
<feature type="mutagenesis site" description="Significantly reduced DNA-binding." evidence="5">
    <original>N</original>
    <variation>A</variation>
    <location>
        <position position="182"/>
    </location>
</feature>
<feature type="mutagenesis site" description="No effect on DNA-binding." evidence="5">
    <original>D</original>
    <variation>A</variation>
    <location>
        <position position="184"/>
    </location>
</feature>
<feature type="mutagenesis site" description="Significantly reduced DNA-binding." evidence="5">
    <original>H</original>
    <variation>A</variation>
    <location>
        <position position="186"/>
    </location>
</feature>
<feature type="mutagenesis site" description="No effect on DNA-binding." evidence="5">
    <original>I</original>
    <variation>A</variation>
    <location>
        <position position="187"/>
    </location>
</feature>
<feature type="mutagenesis site" description="Protein localization in inclusion bodies." evidence="5">
    <original>R</original>
    <variation>A</variation>
    <location>
        <position position="191"/>
    </location>
</feature>
<feature type="mutagenesis site" description="Significantly reduced DNA-binding." evidence="5">
    <original>K</original>
    <variation>A</variation>
    <location>
        <position position="192"/>
    </location>
</feature>
<feature type="mutagenesis site" description="Significantly reduced DNA-binding." evidence="5">
    <original>R</original>
    <variation>A</variation>
    <location>
        <position position="205"/>
    </location>
</feature>
<feature type="mutagenesis site" description="No effect on DNA-binding." evidence="5">
    <original>V</original>
    <variation>A</variation>
    <location>
        <position position="207"/>
    </location>
</feature>
<feature type="strand" evidence="14">
    <location>
        <begin position="5"/>
        <end position="10"/>
    </location>
</feature>
<feature type="helix" evidence="14">
    <location>
        <begin position="14"/>
        <end position="23"/>
    </location>
</feature>
<feature type="turn" evidence="14">
    <location>
        <begin position="26"/>
        <end position="28"/>
    </location>
</feature>
<feature type="strand" evidence="14">
    <location>
        <begin position="29"/>
        <end position="36"/>
    </location>
</feature>
<feature type="strand" evidence="14">
    <location>
        <begin position="43"/>
        <end position="49"/>
    </location>
</feature>
<feature type="helix" evidence="14">
    <location>
        <begin position="50"/>
        <end position="52"/>
    </location>
</feature>
<feature type="strand" evidence="14">
    <location>
        <begin position="67"/>
        <end position="74"/>
    </location>
</feature>
<feature type="helix" evidence="14">
    <location>
        <begin position="77"/>
        <end position="85"/>
    </location>
</feature>
<feature type="strand" evidence="14">
    <location>
        <begin position="89"/>
        <end position="93"/>
    </location>
</feature>
<feature type="helix" evidence="14">
    <location>
        <begin position="97"/>
        <end position="110"/>
    </location>
</feature>
<gene>
    <name evidence="6" type="primary">chxR</name>
    <name evidence="9" type="ordered locus">CTL0894</name>
</gene>
<comment type="function">
    <text evidence="3 4 5">May be a global positive regulator of transcription (PubMed:21057008). Binds a cis-acting element of its own promoter DNA sequence and is hence probably also involved in its own transcription activation (PubMed:21057008, PubMed:21775428, PubMed:24646934). The recognition sequence is 5'-WHGAWNH-N(3-5)-WHGAWNH-3', where W is A/T, H is C/A/T, N is G/C/A/T and the linker length in the middle is 3 to 5 nucleotides (PubMed:21057008).</text>
</comment>
<comment type="subunit">
    <text evidence="3 4 5">Homodimer.</text>
</comment>
<comment type="developmental stage">
    <text evidence="3">Expressed during the middle and late stages of the chlamydial developmental cycle including the stage of the formation of infectious elementary bodies.</text>
</comment>
<sequence>MAGPKHVLLVSEHWDLFFQTKELLNPEEYRCTIGQQYKQELSADLVVCEYSLLPREIRSPKSLEGSFVLVLLDFFDEETSVDLLDRGFWYLIRPITPRILKSAISLFLSQHSLHSVPESIRFGPNVFYVLKLTVETPEGSVHLTPSESGILKRLLINKGQLCLRKHLLEEIKNHAKAIVARNVDVHIASLRKKLGAYGSRIVTLRGVGYLFSDDGDKKFSQQDTKLS</sequence>
<accession>A0A0H3MDW1</accession>
<reference evidence="9" key="1">
    <citation type="journal article" date="2008" name="Genome Res.">
        <title>Chlamydia trachomatis: genome sequence analysis of lymphogranuloma venereum isolates.</title>
        <authorList>
            <person name="Thomson N.R."/>
            <person name="Holden M.T.G."/>
            <person name="Carder C."/>
            <person name="Lennard N."/>
            <person name="Lockey S.J."/>
            <person name="Marsh P."/>
            <person name="Skipp P."/>
            <person name="O'Connor C.D."/>
            <person name="Goodhead I."/>
            <person name="Norbertzcak H."/>
            <person name="Harris B."/>
            <person name="Ormond D."/>
            <person name="Rance R."/>
            <person name="Quail M.A."/>
            <person name="Parkhill J."/>
            <person name="Stephens R.S."/>
            <person name="Clarke I.N."/>
        </authorList>
    </citation>
    <scope>NUCLEOTIDE SEQUENCE [LARGE SCALE GENOMIC DNA]</scope>
    <source>
        <strain>ATCC VR-902B / DSM 19102 / 434/Bu</strain>
    </source>
</reference>
<reference key="2">
    <citation type="journal article" date="2011" name="J. Bacteriol.">
        <title>The atypical OmpR/PhoB response regulator ChxR from Chlamydia trachomatis forms homodimers in vivo and binds a direct repeat of nucleotide sequences.</title>
        <authorList>
            <person name="Hickey J.M."/>
            <person name="Weldon L."/>
            <person name="Hefty P.S."/>
        </authorList>
    </citation>
    <scope>FUNCTION</scope>
    <scope>DNA-BINDING</scope>
    <scope>SUBUNIT</scope>
    <scope>DEVELOPMENTAL STAGE</scope>
    <scope>MUTAGENESIS OF GLU-49</scope>
    <source>
        <strain evidence="6">ATCC VR-902B / DSM 19102 / 434/Bu</strain>
    </source>
</reference>
<reference evidence="11 12 13" key="3">
    <citation type="journal article" date="2011" name="J. Biol. Chem.">
        <title>The atypical response regulator protein ChxR has structural characteristics and dimer interface interactions that are unique within the OmpR/PhoB subfamily.</title>
        <authorList>
            <person name="Hickey J.M."/>
            <person name="Lovell S."/>
            <person name="Battaile K.P."/>
            <person name="Hu L."/>
            <person name="Middaugh C.R."/>
            <person name="Hefty P.S."/>
        </authorList>
    </citation>
    <scope>X-RAY CRYSTALLOGRAPHY (1.60 ANGSTROMS) OF 2-113</scope>
    <scope>FUNCTION</scope>
    <scope>DNA-BINDING</scope>
    <scope>SUBUNIT</scope>
    <scope>CIRCULAR DICHROISM ANALYSIS</scope>
    <scope>MUTAGENESIS OF GLU-49; ASP-73; GLU-78; TRP-89 AND LYS-101</scope>
    <source>
        <strain evidence="7">ATCC VR-902B / DSM 19102 / 434/Bu</strain>
    </source>
</reference>
<reference evidence="10" key="4">
    <citation type="journal article" date="2014" name="PLoS ONE">
        <title>Atypical response regulator ChxR from Chlamydia trachomatis is structurally poised for DNA binding.</title>
        <authorList>
            <person name="Barta M.L."/>
            <person name="Hickey J.M."/>
            <person name="Anbanandam A."/>
            <person name="Dyer K."/>
            <person name="Hammel M."/>
            <person name="Hefty P.S."/>
        </authorList>
    </citation>
    <scope>STRUCTURE BY NMR OF 114-227</scope>
    <scope>FUNCTION</scope>
    <scope>DNA-BINDING</scope>
    <scope>SUBUNIT</scope>
    <scope>MUTAGENESIS OF ASN-182; ASP-184; HIS-186; ILE-187; ARG-191; LYS-192; ARG-205 AND VAL-207</scope>
    <source>
        <strain evidence="8">ATCC VR-902B / DSM 19102 / 434/Bu</strain>
    </source>
</reference>